<organism>
    <name type="scientific">Rhizobium tropici</name>
    <dbReference type="NCBI Taxonomy" id="398"/>
    <lineage>
        <taxon>Bacteria</taxon>
        <taxon>Pseudomonadati</taxon>
        <taxon>Pseudomonadota</taxon>
        <taxon>Alphaproteobacteria</taxon>
        <taxon>Hyphomicrobiales</taxon>
        <taxon>Rhizobiaceae</taxon>
        <taxon>Rhizobium/Agrobacterium group</taxon>
        <taxon>Rhizobium</taxon>
    </lineage>
</organism>
<gene>
    <name type="primary">ccsA</name>
</gene>
<keyword id="KW-0808">Transferase</keyword>
<keyword id="KW-0816">Tricarboxylic acid cycle</keyword>
<proteinExistence type="inferred from homology"/>
<accession>P51037</accession>
<name>CISY1_RHITR</name>
<feature type="chain" id="PRO_0000169954" description="Citrate synthase, chromosomal">
    <location>
        <begin position="1"/>
        <end position="429"/>
    </location>
</feature>
<feature type="active site" evidence="1">
    <location>
        <position position="306"/>
    </location>
</feature>
<feature type="active site" evidence="1">
    <location>
        <position position="364"/>
    </location>
</feature>
<sequence>MTEQSAKLTWGEKTVDLPVKTGTIGPSVIDIGALYKNTSTFTYDPGFTSTASCESSITFIDGDEGVLLHRGYPIEQLAEHGDFLEVCYLLLYGELPTAAQKKDFDYRVVHHTMVHEQMSRFFTGFRRDAHPMAVMCGCVGALSAFYHDSTDITDPHQRMVASLRMIAKMPTLAAMAYKYHIGQPFVYPKNDLDYASNFLRMCFAVPCEEYVVNPVLARAMDRIFILHADHEQNASTSTVRLAGSSGANPFACIAAGIACLWGPAHGGANEAALNMLTEIGTVDRIPEYIARAKDKNDPFRLMGFGHRVYKNYDPRAKIMQKTAHEVLGELGIKDDPLLDIAIELERIALTDDYFIEKKLYPNVDFYSGITLKALGFPTTMFTVLFALARTVGWIAQWNEMIEDPDQRIGRPRHVYTGAPLREYVPVSKR</sequence>
<dbReference type="EC" id="2.3.3.16"/>
<dbReference type="EMBL" id="L41815">
    <property type="protein sequence ID" value="AAB97876.1"/>
    <property type="molecule type" value="Genomic_DNA"/>
</dbReference>
<dbReference type="SMR" id="P51037"/>
<dbReference type="UniPathway" id="UPA00223">
    <property type="reaction ID" value="UER00717"/>
</dbReference>
<dbReference type="GO" id="GO:0005737">
    <property type="term" value="C:cytoplasm"/>
    <property type="evidence" value="ECO:0007669"/>
    <property type="project" value="InterPro"/>
</dbReference>
<dbReference type="GO" id="GO:0004108">
    <property type="term" value="F:citrate (Si)-synthase activity"/>
    <property type="evidence" value="ECO:0007669"/>
    <property type="project" value="InterPro"/>
</dbReference>
<dbReference type="GO" id="GO:0006099">
    <property type="term" value="P:tricarboxylic acid cycle"/>
    <property type="evidence" value="ECO:0007669"/>
    <property type="project" value="UniProtKB-UniPathway"/>
</dbReference>
<dbReference type="CDD" id="cd06114">
    <property type="entry name" value="EcCS_like"/>
    <property type="match status" value="1"/>
</dbReference>
<dbReference type="FunFam" id="1.10.230.10:FF:000002">
    <property type="entry name" value="Citrate synthase"/>
    <property type="match status" value="1"/>
</dbReference>
<dbReference type="Gene3D" id="2.20.28.60">
    <property type="match status" value="1"/>
</dbReference>
<dbReference type="Gene3D" id="1.10.580.10">
    <property type="entry name" value="Citrate Synthase, domain 1"/>
    <property type="match status" value="1"/>
</dbReference>
<dbReference type="Gene3D" id="1.10.230.10">
    <property type="entry name" value="Cytochrome P450-Terp, domain 2"/>
    <property type="match status" value="1"/>
</dbReference>
<dbReference type="InterPro" id="IPR016142">
    <property type="entry name" value="Citrate_synth-like_lrg_a-sub"/>
</dbReference>
<dbReference type="InterPro" id="IPR016143">
    <property type="entry name" value="Citrate_synth-like_sm_a-sub"/>
</dbReference>
<dbReference type="InterPro" id="IPR002020">
    <property type="entry name" value="Citrate_synthase"/>
</dbReference>
<dbReference type="InterPro" id="IPR019810">
    <property type="entry name" value="Citrate_synthase_AS"/>
</dbReference>
<dbReference type="InterPro" id="IPR024176">
    <property type="entry name" value="Citrate_synthase_bac-typ"/>
</dbReference>
<dbReference type="InterPro" id="IPR036969">
    <property type="entry name" value="Citrate_synthase_sf"/>
</dbReference>
<dbReference type="InterPro" id="IPR010953">
    <property type="entry name" value="Citrate_synthase_typ-I"/>
</dbReference>
<dbReference type="NCBIfam" id="TIGR01798">
    <property type="entry name" value="cit_synth_I"/>
    <property type="match status" value="1"/>
</dbReference>
<dbReference type="NCBIfam" id="NF004126">
    <property type="entry name" value="PRK05614.1"/>
    <property type="match status" value="1"/>
</dbReference>
<dbReference type="PANTHER" id="PTHR42871">
    <property type="entry name" value="CITRATE SYNTHASE"/>
    <property type="match status" value="1"/>
</dbReference>
<dbReference type="PANTHER" id="PTHR42871:SF1">
    <property type="entry name" value="CITRATE SYNTHASE"/>
    <property type="match status" value="1"/>
</dbReference>
<dbReference type="Pfam" id="PF00285">
    <property type="entry name" value="Citrate_synt"/>
    <property type="match status" value="1"/>
</dbReference>
<dbReference type="PIRSF" id="PIRSF001369">
    <property type="entry name" value="Citrate_synth"/>
    <property type="match status" value="1"/>
</dbReference>
<dbReference type="PRINTS" id="PR00143">
    <property type="entry name" value="CITRTSNTHASE"/>
</dbReference>
<dbReference type="SUPFAM" id="SSF48256">
    <property type="entry name" value="Citrate synthase"/>
    <property type="match status" value="1"/>
</dbReference>
<dbReference type="PROSITE" id="PS00480">
    <property type="entry name" value="CITRATE_SYNTHASE"/>
    <property type="match status" value="1"/>
</dbReference>
<evidence type="ECO:0000255" key="1">
    <source>
        <dbReference type="PROSITE-ProRule" id="PRU10117"/>
    </source>
</evidence>
<evidence type="ECO:0000305" key="2"/>
<protein>
    <recommendedName>
        <fullName>Citrate synthase, chromosomal</fullName>
        <ecNumber>2.3.3.16</ecNumber>
    </recommendedName>
</protein>
<reference key="1">
    <citation type="journal article" date="1995" name="Appl. Environ. Microbiol.">
        <title>Rhizobium tropici chromosomal citrate synthase gene.</title>
        <authorList>
            <person name="Hernandez-Lucas I."/>
            <person name="Pardo M.A."/>
            <person name="Segovia L."/>
            <person name="Miranda J."/>
            <person name="Martinez-Romero E."/>
        </authorList>
    </citation>
    <scope>NUCLEOTIDE SEQUENCE [GENOMIC DNA]</scope>
    <source>
        <strain>CFN 299</strain>
    </source>
</reference>
<reference key="2">
    <citation type="submission" date="1998-01" db="EMBL/GenBank/DDBJ databases">
        <authorList>
            <person name="Rios J.M."/>
        </authorList>
    </citation>
    <scope>SEQUENCE REVISION</scope>
</reference>
<comment type="catalytic activity">
    <reaction evidence="1">
        <text>oxaloacetate + acetyl-CoA + H2O = citrate + CoA + H(+)</text>
        <dbReference type="Rhea" id="RHEA:16845"/>
        <dbReference type="ChEBI" id="CHEBI:15377"/>
        <dbReference type="ChEBI" id="CHEBI:15378"/>
        <dbReference type="ChEBI" id="CHEBI:16452"/>
        <dbReference type="ChEBI" id="CHEBI:16947"/>
        <dbReference type="ChEBI" id="CHEBI:57287"/>
        <dbReference type="ChEBI" id="CHEBI:57288"/>
        <dbReference type="EC" id="2.3.3.16"/>
    </reaction>
</comment>
<comment type="pathway">
    <text>Carbohydrate metabolism; tricarboxylic acid cycle; isocitrate from oxaloacetate: step 1/2.</text>
</comment>
<comment type="similarity">
    <text evidence="2">Belongs to the citrate synthase family.</text>
</comment>